<proteinExistence type="inferred from homology"/>
<comment type="function">
    <text evidence="1">One of the proteins required for the normal export of preproteins out of the cell cytoplasm. It is a molecular chaperone that binds to a subset of precursor proteins, maintaining them in a translocation-competent state. It also specifically binds to its receptor SecA.</text>
</comment>
<comment type="subunit">
    <text evidence="1">Homotetramer, a dimer of dimers. One homotetramer interacts with 1 SecA dimer.</text>
</comment>
<comment type="subcellular location">
    <subcellularLocation>
        <location evidence="1">Cytoplasm</location>
    </subcellularLocation>
</comment>
<comment type="similarity">
    <text evidence="1">Belongs to the SecB family.</text>
</comment>
<reference key="1">
    <citation type="submission" date="2007-06" db="EMBL/GenBank/DDBJ databases">
        <authorList>
            <person name="Dodson R.J."/>
            <person name="Harkins D."/>
            <person name="Paulsen I.T."/>
        </authorList>
    </citation>
    <scope>NUCLEOTIDE SEQUENCE [LARGE SCALE GENOMIC DNA]</scope>
    <source>
        <strain>DSM 24068 / PA7</strain>
    </source>
</reference>
<sequence length="163" mass="18146">MTEQATNGAADEQQPQFSLQRIYLRDLSFESPKSPEIFRQEWNPSISLDLNTRQKQLDGDFYEVVLTVSVTVKNGEDTTAFIAEVQQAGIFLIKNLDPSSMSHTLGAFCPNILFPYAREALDNLVVRGSFPALMLSPVNFDALYAQEIARMQASGEIPTPSVQ</sequence>
<protein>
    <recommendedName>
        <fullName evidence="1">Protein-export protein SecB</fullName>
    </recommendedName>
</protein>
<feature type="chain" id="PRO_1000062491" description="Protein-export protein SecB">
    <location>
        <begin position="1"/>
        <end position="163"/>
    </location>
</feature>
<accession>A6VDP6</accession>
<dbReference type="EMBL" id="CP000744">
    <property type="protein sequence ID" value="ABR84193.1"/>
    <property type="molecule type" value="Genomic_DNA"/>
</dbReference>
<dbReference type="RefSeq" id="WP_003096050.1">
    <property type="nucleotide sequence ID" value="NC_009656.1"/>
</dbReference>
<dbReference type="SMR" id="A6VDP6"/>
<dbReference type="GeneID" id="77223656"/>
<dbReference type="KEGG" id="pap:PSPA7_5862"/>
<dbReference type="HOGENOM" id="CLU_111574_1_0_6"/>
<dbReference type="Proteomes" id="UP000001582">
    <property type="component" value="Chromosome"/>
</dbReference>
<dbReference type="GO" id="GO:0005737">
    <property type="term" value="C:cytoplasm"/>
    <property type="evidence" value="ECO:0007669"/>
    <property type="project" value="UniProtKB-SubCell"/>
</dbReference>
<dbReference type="GO" id="GO:0051082">
    <property type="term" value="F:unfolded protein binding"/>
    <property type="evidence" value="ECO:0007669"/>
    <property type="project" value="InterPro"/>
</dbReference>
<dbReference type="GO" id="GO:0006457">
    <property type="term" value="P:protein folding"/>
    <property type="evidence" value="ECO:0007669"/>
    <property type="project" value="UniProtKB-UniRule"/>
</dbReference>
<dbReference type="GO" id="GO:0051262">
    <property type="term" value="P:protein tetramerization"/>
    <property type="evidence" value="ECO:0007669"/>
    <property type="project" value="InterPro"/>
</dbReference>
<dbReference type="GO" id="GO:0015031">
    <property type="term" value="P:protein transport"/>
    <property type="evidence" value="ECO:0007669"/>
    <property type="project" value="UniProtKB-UniRule"/>
</dbReference>
<dbReference type="Gene3D" id="3.10.420.10">
    <property type="entry name" value="SecB-like"/>
    <property type="match status" value="1"/>
</dbReference>
<dbReference type="HAMAP" id="MF_00821">
    <property type="entry name" value="SecB"/>
    <property type="match status" value="1"/>
</dbReference>
<dbReference type="InterPro" id="IPR003708">
    <property type="entry name" value="SecB"/>
</dbReference>
<dbReference type="InterPro" id="IPR035958">
    <property type="entry name" value="SecB-like_sf"/>
</dbReference>
<dbReference type="NCBIfam" id="NF004393">
    <property type="entry name" value="PRK05751.1-4"/>
    <property type="match status" value="1"/>
</dbReference>
<dbReference type="NCBIfam" id="TIGR00809">
    <property type="entry name" value="secB"/>
    <property type="match status" value="1"/>
</dbReference>
<dbReference type="PANTHER" id="PTHR36918">
    <property type="match status" value="1"/>
</dbReference>
<dbReference type="PANTHER" id="PTHR36918:SF1">
    <property type="entry name" value="PROTEIN-EXPORT PROTEIN SECB"/>
    <property type="match status" value="1"/>
</dbReference>
<dbReference type="Pfam" id="PF02556">
    <property type="entry name" value="SecB"/>
    <property type="match status" value="1"/>
</dbReference>
<dbReference type="PRINTS" id="PR01594">
    <property type="entry name" value="SECBCHAPRONE"/>
</dbReference>
<dbReference type="SUPFAM" id="SSF54611">
    <property type="entry name" value="SecB-like"/>
    <property type="match status" value="1"/>
</dbReference>
<name>SECB_PSEP7</name>
<evidence type="ECO:0000255" key="1">
    <source>
        <dbReference type="HAMAP-Rule" id="MF_00821"/>
    </source>
</evidence>
<gene>
    <name evidence="1" type="primary">secB</name>
    <name type="ordered locus">PSPA7_5862</name>
</gene>
<keyword id="KW-0143">Chaperone</keyword>
<keyword id="KW-0963">Cytoplasm</keyword>
<keyword id="KW-0653">Protein transport</keyword>
<keyword id="KW-0811">Translocation</keyword>
<keyword id="KW-0813">Transport</keyword>
<organism>
    <name type="scientific">Pseudomonas paraeruginosa (strain DSM 24068 / PA7)</name>
    <name type="common">Pseudomonas aeruginosa (strain PA7)</name>
    <dbReference type="NCBI Taxonomy" id="381754"/>
    <lineage>
        <taxon>Bacteria</taxon>
        <taxon>Pseudomonadati</taxon>
        <taxon>Pseudomonadota</taxon>
        <taxon>Gammaproteobacteria</taxon>
        <taxon>Pseudomonadales</taxon>
        <taxon>Pseudomonadaceae</taxon>
        <taxon>Pseudomonas</taxon>
        <taxon>Pseudomonas paraeruginosa</taxon>
    </lineage>
</organism>